<keyword id="KW-1072">Activation of host autophagy by virus</keyword>
<keyword id="KW-0260">Enterotoxin</keyword>
<keyword id="KW-0325">Glycoprotein</keyword>
<keyword id="KW-1038">Host endoplasmic reticulum</keyword>
<keyword id="KW-1043">Host membrane</keyword>
<keyword id="KW-0945">Host-virus interaction</keyword>
<keyword id="KW-0407">Ion channel</keyword>
<keyword id="KW-0406">Ion transport</keyword>
<keyword id="KW-0472">Membrane</keyword>
<keyword id="KW-1185">Reference proteome</keyword>
<keyword id="KW-0964">Secreted</keyword>
<keyword id="KW-0735">Signal-anchor</keyword>
<keyword id="KW-0800">Toxin</keyword>
<keyword id="KW-0812">Transmembrane</keyword>
<keyword id="KW-1133">Transmembrane helix</keyword>
<keyword id="KW-0813">Transport</keyword>
<keyword id="KW-1182">Viral ion channel</keyword>
<keyword id="KW-0843">Virulence</keyword>
<protein>
    <recommendedName>
        <fullName evidence="1">Non-structural glycoprotein 4</fullName>
        <shortName evidence="1">NSP4</shortName>
    </recommendedName>
    <alternativeName>
        <fullName evidence="1">NCVP5</fullName>
    </alternativeName>
    <alternativeName>
        <fullName evidence="1">NS28</fullName>
    </alternativeName>
</protein>
<proteinExistence type="inferred from homology"/>
<name>NSP4_ROTJ1</name>
<organismHost>
    <name type="scientific">Homo sapiens</name>
    <name type="common">Human</name>
    <dbReference type="NCBI Taxonomy" id="9606"/>
</organismHost>
<comment type="function">
    <text evidence="1">Plays an essential role in the virus replication cycle by acting as a viroporin. Creates a pore in the host endoplasmic reticulum and as a consequence releases Ca(2+) in the cytoplasm of infected cell. In turn, high levels of cytoplasmic calcium trigger membrane trafficking and transport of viral ER-associated proteins to viroplasms, sites of viral genome replication and immature particle assembly.</text>
</comment>
<comment type="function">
    <text evidence="1">The secreted form acts as an enterotoxin that causes phospholipase C-dependent elevation of the intracellular calcium concentration in host intestinal mucosa cells. Increased concentration of intracellular calcium disrupts the cytoskeleton and the tight junctions, raising the paracellular permeability. Potentiates chloride ion secretion through a calcium ion-dependent signaling pathway, inducing age-dependent diarrhea. To perform this enterotoxigenic role in vivo, NSP4 is released from infected enterocytes in a soluble form capable of diffusing within the intestinal lumen and interacting with host plasma membrane receptors on neighboring epithelial cells such as integrins ITGA1/ITGB1 and ITGA2/ITGB1.</text>
</comment>
<comment type="subunit">
    <text evidence="1">Homotetramer. Interacts with the immature particle in the viroplasm. Interacts with host CAV1, early and late in infection. Interacts with host integrin ITGA1/ITGB1 heterodimer. Interacts with host integrin ITGA2/ITGB1 heterodimer. Interaction with microtubules blocks trafficking to the Golgi apparatus.</text>
</comment>
<comment type="subcellular location">
    <subcellularLocation>
        <location evidence="1">Host rough endoplasmic reticulum membrane</location>
        <topology evidence="1">Single-pass type III membrane protein</topology>
    </subcellularLocation>
    <subcellularLocation>
        <location evidence="1">Host membrane</location>
        <location evidence="1">Host caveola</location>
        <topology evidence="1">Single-pass type III membrane protein</topology>
    </subcellularLocation>
    <subcellularLocation>
        <location evidence="1">Secreted</location>
    </subcellularLocation>
    <text evidence="1">NSP4 also localizes in vesicular structures which contain autophagosomal markers and associate with viroplasms in virus-infected cells. Additionally, a soluble form of glycosylated NSP4 is secreted despite retention of its transmembrane domain.</text>
</comment>
<comment type="PTM">
    <text evidence="1">The N-glycosyl content is primarily Man(9)GlcNAc, with a small amount of Man(8)GlcNAc.</text>
</comment>
<comment type="similarity">
    <text evidence="1">Belongs to the rotavirus NSP4 family.</text>
</comment>
<feature type="chain" id="PRO_0000369866" description="Non-structural glycoprotein 4">
    <location>
        <begin position="1"/>
        <end position="213"/>
    </location>
</feature>
<feature type="topological domain" description="Lumenal" evidence="1">
    <location>
        <begin position="1"/>
        <end position="51"/>
    </location>
</feature>
<feature type="transmembrane region" description="Helical; Signal-anchor for type III membrane protein" evidence="1">
    <location>
        <begin position="52"/>
        <end position="74"/>
    </location>
</feature>
<feature type="topological domain" description="Cytoplasmic" evidence="1">
    <location>
        <begin position="75"/>
        <end position="213"/>
    </location>
</feature>
<feature type="glycosylation site" description="N-linked (GlcNAc...) asparagine; by host" evidence="2">
    <location>
        <position position="50"/>
    </location>
</feature>
<dbReference type="EMBL" id="DQ113906">
    <property type="protein sequence ID" value="AAZ03494.1"/>
    <property type="molecule type" value="Genomic_RNA"/>
</dbReference>
<dbReference type="RefSeq" id="YP_392499.1">
    <property type="nucleotide sequence ID" value="NC_007557.1"/>
</dbReference>
<dbReference type="SMR" id="Q45UF1"/>
<dbReference type="GeneID" id="5076659"/>
<dbReference type="KEGG" id="vg:5076659"/>
<dbReference type="Proteomes" id="UP000007663">
    <property type="component" value="Genome"/>
</dbReference>
<dbReference type="GO" id="GO:0005576">
    <property type="term" value="C:extracellular region"/>
    <property type="evidence" value="ECO:0007669"/>
    <property type="project" value="UniProtKB-SubCell"/>
</dbReference>
<dbReference type="GO" id="GO:0044155">
    <property type="term" value="C:host caveola"/>
    <property type="evidence" value="ECO:0007669"/>
    <property type="project" value="UniProtKB-SubCell"/>
</dbReference>
<dbReference type="GO" id="GO:0044169">
    <property type="term" value="C:host cell rough endoplasmic reticulum membrane"/>
    <property type="evidence" value="ECO:0007669"/>
    <property type="project" value="UniProtKB-SubCell"/>
</dbReference>
<dbReference type="GO" id="GO:0016020">
    <property type="term" value="C:membrane"/>
    <property type="evidence" value="ECO:0007669"/>
    <property type="project" value="UniProtKB-UniRule"/>
</dbReference>
<dbReference type="GO" id="GO:0015267">
    <property type="term" value="F:channel activity"/>
    <property type="evidence" value="ECO:0007669"/>
    <property type="project" value="UniProtKB-KW"/>
</dbReference>
<dbReference type="GO" id="GO:0090729">
    <property type="term" value="F:toxin activity"/>
    <property type="evidence" value="ECO:0007669"/>
    <property type="project" value="UniProtKB-UniRule"/>
</dbReference>
<dbReference type="GO" id="GO:0034220">
    <property type="term" value="P:monoatomic ion transmembrane transport"/>
    <property type="evidence" value="ECO:0007669"/>
    <property type="project" value="UniProtKB-KW"/>
</dbReference>
<dbReference type="GO" id="GO:0039520">
    <property type="term" value="P:symbiont-mediated activation of host autophagy"/>
    <property type="evidence" value="ECO:0007669"/>
    <property type="project" value="UniProtKB-KW"/>
</dbReference>
<dbReference type="GO" id="GO:0016032">
    <property type="term" value="P:viral process"/>
    <property type="evidence" value="ECO:0007669"/>
    <property type="project" value="UniProtKB-UniRule"/>
</dbReference>
<dbReference type="HAMAP" id="MF_04091">
    <property type="entry name" value="ROTA_NSP4"/>
    <property type="match status" value="1"/>
</dbReference>
<dbReference type="InterPro" id="IPR002107">
    <property type="entry name" value="Rotavirus_NSP4"/>
</dbReference>
<reference key="1">
    <citation type="journal article" date="2008" name="J. Gen. Virol.">
        <title>Molecular characterization of a novel adult diarrhoea rotavirus strain J19 isolated in China and its significance for the evolution and origin of group B rotaviruses.</title>
        <authorList>
            <person name="Jiang S."/>
            <person name="Ji S."/>
            <person name="Tang Q."/>
            <person name="Cui X."/>
            <person name="Yang H."/>
            <person name="Kan B."/>
            <person name="Gao S."/>
        </authorList>
    </citation>
    <scope>NUCLEOTIDE SEQUENCE [GENOMIC RNA]</scope>
</reference>
<evidence type="ECO:0000255" key="1">
    <source>
        <dbReference type="HAMAP-Rule" id="MF_04091"/>
    </source>
</evidence>
<evidence type="ECO:0000255" key="2">
    <source>
        <dbReference type="PROSITE-ProRule" id="PRU00498"/>
    </source>
</evidence>
<sequence>MEGTSESPVLDEFEVNNNDYDNDFISRFSQNPLNAFSLFTDGNLQEYFMNNSLEKIVIHVVLIVISLCGIKAQTSKIIYVVRLLFWKIYNVINNLVNKVINREKIINHQVVDNRFREFEERFRLLLLQHDKNIAKQDDIVQYNKLDNFAESIKSEFNLKVAEMERRFQELKWRCDMIANKAMNTIVLANTVDSNNKDEKIVFDEGSVVQYNRE</sequence>
<organism>
    <name type="scientific">Rotavirus X (strain RVX/Human/China/NADRV-J19/1997/GXP[X])</name>
    <name type="common">RV ADRV-N</name>
    <name type="synonym">Rotavirus (isolate novel adult diarrhea rotavirus-J19)</name>
    <dbReference type="NCBI Taxonomy" id="335103"/>
    <lineage>
        <taxon>Viruses</taxon>
        <taxon>Riboviria</taxon>
        <taxon>Orthornavirae</taxon>
        <taxon>Duplornaviricota</taxon>
        <taxon>Resentoviricetes</taxon>
        <taxon>Reovirales</taxon>
        <taxon>Sedoreoviridae</taxon>
        <taxon>Rotavirus</taxon>
        <taxon>Rotavirus H</taxon>
    </lineage>
</organism>
<accession>Q45UF1</accession>